<sequence>MRVKIVSKPTSQLNNIIEKIKNISTKLGFEVVDKDFDYVIAVGGDGTLLRAVKQNKPVIAVKAGRRGLLMDVPVDKFEEALLRLKKGDYEEEEYMLLEMIYNDKVELGFNEVGILYDRPEAIKVGISFDTERVSVEGDGVLVSTPQGSSGWGMSATNSLLYKDLSAIEIIFVNPIFYYLRSVVIPPKPLTLRLEDKGYPQTARAVVDGEVVTLIKTNQEITVRVSQRKAKILRFFKLDLIGEVLHAYHI</sequence>
<dbReference type="EC" id="2.7.1.23" evidence="1"/>
<dbReference type="EMBL" id="CP001403">
    <property type="protein sequence ID" value="ACP44329.1"/>
    <property type="molecule type" value="Genomic_DNA"/>
</dbReference>
<dbReference type="RefSeq" id="WP_012710214.1">
    <property type="nucleotide sequence ID" value="NC_012622.1"/>
</dbReference>
<dbReference type="SMR" id="C3N7W1"/>
<dbReference type="KEGG" id="siy:YG5714_0035"/>
<dbReference type="HOGENOM" id="CLU_008831_0_3_2"/>
<dbReference type="Proteomes" id="UP000002308">
    <property type="component" value="Chromosome"/>
</dbReference>
<dbReference type="GO" id="GO:0005737">
    <property type="term" value="C:cytoplasm"/>
    <property type="evidence" value="ECO:0007669"/>
    <property type="project" value="UniProtKB-SubCell"/>
</dbReference>
<dbReference type="GO" id="GO:0005524">
    <property type="term" value="F:ATP binding"/>
    <property type="evidence" value="ECO:0007669"/>
    <property type="project" value="UniProtKB-KW"/>
</dbReference>
<dbReference type="GO" id="GO:0046872">
    <property type="term" value="F:metal ion binding"/>
    <property type="evidence" value="ECO:0007669"/>
    <property type="project" value="UniProtKB-UniRule"/>
</dbReference>
<dbReference type="GO" id="GO:0003951">
    <property type="term" value="F:NAD+ kinase activity"/>
    <property type="evidence" value="ECO:0007669"/>
    <property type="project" value="UniProtKB-UniRule"/>
</dbReference>
<dbReference type="GO" id="GO:0019674">
    <property type="term" value="P:NAD metabolic process"/>
    <property type="evidence" value="ECO:0007669"/>
    <property type="project" value="InterPro"/>
</dbReference>
<dbReference type="GO" id="GO:0006741">
    <property type="term" value="P:NADP biosynthetic process"/>
    <property type="evidence" value="ECO:0007669"/>
    <property type="project" value="UniProtKB-UniRule"/>
</dbReference>
<dbReference type="Gene3D" id="3.40.50.10330">
    <property type="entry name" value="Probable inorganic polyphosphate/atp-NAD kinase, domain 1"/>
    <property type="match status" value="1"/>
</dbReference>
<dbReference type="Gene3D" id="2.60.200.30">
    <property type="entry name" value="Probable inorganic polyphosphate/atp-NAD kinase, domain 2"/>
    <property type="match status" value="1"/>
</dbReference>
<dbReference type="HAMAP" id="MF_00361">
    <property type="entry name" value="NAD_kinase"/>
    <property type="match status" value="1"/>
</dbReference>
<dbReference type="InterPro" id="IPR017438">
    <property type="entry name" value="ATP-NAD_kinase_N"/>
</dbReference>
<dbReference type="InterPro" id="IPR017437">
    <property type="entry name" value="ATP-NAD_kinase_PpnK-typ_C"/>
</dbReference>
<dbReference type="InterPro" id="IPR016064">
    <property type="entry name" value="NAD/diacylglycerol_kinase_sf"/>
</dbReference>
<dbReference type="InterPro" id="IPR002504">
    <property type="entry name" value="NADK"/>
</dbReference>
<dbReference type="PANTHER" id="PTHR20275:SF43">
    <property type="entry name" value="BIFUNCTIONAL NADP PHOSPHATASE_NAD KINASE"/>
    <property type="match status" value="1"/>
</dbReference>
<dbReference type="PANTHER" id="PTHR20275">
    <property type="entry name" value="NAD KINASE"/>
    <property type="match status" value="1"/>
</dbReference>
<dbReference type="Pfam" id="PF01513">
    <property type="entry name" value="NAD_kinase"/>
    <property type="match status" value="1"/>
</dbReference>
<dbReference type="Pfam" id="PF20143">
    <property type="entry name" value="NAD_kinase_C"/>
    <property type="match status" value="1"/>
</dbReference>
<dbReference type="SUPFAM" id="SSF111331">
    <property type="entry name" value="NAD kinase/diacylglycerol kinase-like"/>
    <property type="match status" value="1"/>
</dbReference>
<organism>
    <name type="scientific">Saccharolobus islandicus (strain Y.G.57.14 / Yellowstone #1)</name>
    <name type="common">Sulfolobus islandicus</name>
    <dbReference type="NCBI Taxonomy" id="439386"/>
    <lineage>
        <taxon>Archaea</taxon>
        <taxon>Thermoproteota</taxon>
        <taxon>Thermoprotei</taxon>
        <taxon>Sulfolobales</taxon>
        <taxon>Sulfolobaceae</taxon>
        <taxon>Saccharolobus</taxon>
    </lineage>
</organism>
<proteinExistence type="inferred from homology"/>
<feature type="chain" id="PRO_1000205430" description="NAD kinase">
    <location>
        <begin position="1"/>
        <end position="249"/>
    </location>
</feature>
<feature type="active site" description="Proton acceptor" evidence="1">
    <location>
        <position position="45"/>
    </location>
</feature>
<feature type="binding site" evidence="1">
    <location>
        <begin position="45"/>
        <end position="46"/>
    </location>
    <ligand>
        <name>NAD(+)</name>
        <dbReference type="ChEBI" id="CHEBI:57540"/>
    </ligand>
</feature>
<feature type="binding site" evidence="1">
    <location>
        <position position="50"/>
    </location>
    <ligand>
        <name>NAD(+)</name>
        <dbReference type="ChEBI" id="CHEBI:57540"/>
    </ligand>
</feature>
<feature type="binding site" evidence="1">
    <location>
        <begin position="110"/>
        <end position="111"/>
    </location>
    <ligand>
        <name>NAD(+)</name>
        <dbReference type="ChEBI" id="CHEBI:57540"/>
    </ligand>
</feature>
<feature type="binding site" evidence="1">
    <location>
        <position position="138"/>
    </location>
    <ligand>
        <name>NAD(+)</name>
        <dbReference type="ChEBI" id="CHEBI:57540"/>
    </ligand>
</feature>
<feature type="binding site" evidence="1">
    <location>
        <begin position="149"/>
        <end position="154"/>
    </location>
    <ligand>
        <name>NAD(+)</name>
        <dbReference type="ChEBI" id="CHEBI:57540"/>
    </ligand>
</feature>
<accession>C3N7W1</accession>
<protein>
    <recommendedName>
        <fullName evidence="1">NAD kinase</fullName>
        <ecNumber evidence="1">2.7.1.23</ecNumber>
    </recommendedName>
    <alternativeName>
        <fullName evidence="1">ATP-dependent NAD kinase</fullName>
    </alternativeName>
</protein>
<keyword id="KW-0067">ATP-binding</keyword>
<keyword id="KW-0963">Cytoplasm</keyword>
<keyword id="KW-0418">Kinase</keyword>
<keyword id="KW-0520">NAD</keyword>
<keyword id="KW-0521">NADP</keyword>
<keyword id="KW-0547">Nucleotide-binding</keyword>
<keyword id="KW-0808">Transferase</keyword>
<comment type="function">
    <text evidence="1">Involved in the regulation of the intracellular balance of NAD and NADP, and is a key enzyme in the biosynthesis of NADP. Catalyzes specifically the phosphorylation on 2'-hydroxyl of the adenosine moiety of NAD to yield NADP.</text>
</comment>
<comment type="catalytic activity">
    <reaction evidence="1">
        <text>NAD(+) + ATP = ADP + NADP(+) + H(+)</text>
        <dbReference type="Rhea" id="RHEA:18629"/>
        <dbReference type="ChEBI" id="CHEBI:15378"/>
        <dbReference type="ChEBI" id="CHEBI:30616"/>
        <dbReference type="ChEBI" id="CHEBI:57540"/>
        <dbReference type="ChEBI" id="CHEBI:58349"/>
        <dbReference type="ChEBI" id="CHEBI:456216"/>
        <dbReference type="EC" id="2.7.1.23"/>
    </reaction>
</comment>
<comment type="cofactor">
    <cofactor evidence="1">
        <name>a divalent metal cation</name>
        <dbReference type="ChEBI" id="CHEBI:60240"/>
    </cofactor>
</comment>
<comment type="subcellular location">
    <subcellularLocation>
        <location evidence="1">Cytoplasm</location>
    </subcellularLocation>
</comment>
<comment type="similarity">
    <text evidence="1">Belongs to the NAD kinase family.</text>
</comment>
<evidence type="ECO:0000255" key="1">
    <source>
        <dbReference type="HAMAP-Rule" id="MF_00361"/>
    </source>
</evidence>
<gene>
    <name evidence="1" type="primary">nadK</name>
    <name type="ordered locus">YG5714_0035</name>
</gene>
<reference key="1">
    <citation type="journal article" date="2009" name="Proc. Natl. Acad. Sci. U.S.A.">
        <title>Biogeography of the Sulfolobus islandicus pan-genome.</title>
        <authorList>
            <person name="Reno M.L."/>
            <person name="Held N.L."/>
            <person name="Fields C.J."/>
            <person name="Burke P.V."/>
            <person name="Whitaker R.J."/>
        </authorList>
    </citation>
    <scope>NUCLEOTIDE SEQUENCE [LARGE SCALE GENOMIC DNA]</scope>
    <source>
        <strain>Y.G.57.14 / Yellowstone #1</strain>
    </source>
</reference>
<name>NADK_SACI7</name>